<feature type="signal peptide" evidence="2">
    <location>
        <begin position="1"/>
        <end position="38"/>
    </location>
</feature>
<feature type="chain" id="PRO_0000005850" description="Collagen alpha-4(IV) chain">
    <location>
        <begin position="39"/>
        <end position="1690"/>
    </location>
</feature>
<feature type="domain" description="Collagen IV NC1" evidence="3">
    <location>
        <begin position="1465"/>
        <end position="1690"/>
    </location>
</feature>
<feature type="region of interest" description="7S domain">
    <location>
        <begin position="39"/>
        <end position="64"/>
    </location>
</feature>
<feature type="region of interest" description="Disordered" evidence="4">
    <location>
        <begin position="61"/>
        <end position="173"/>
    </location>
</feature>
<feature type="region of interest" description="Triple-helical region">
    <location>
        <begin position="65"/>
        <end position="1459"/>
    </location>
</feature>
<feature type="region of interest" description="Disordered" evidence="4">
    <location>
        <begin position="187"/>
        <end position="258"/>
    </location>
</feature>
<feature type="region of interest" description="Disordered" evidence="4">
    <location>
        <begin position="369"/>
        <end position="390"/>
    </location>
</feature>
<feature type="region of interest" description="Disordered" evidence="4">
    <location>
        <begin position="405"/>
        <end position="451"/>
    </location>
</feature>
<feature type="region of interest" description="Disordered" evidence="4">
    <location>
        <begin position="469"/>
        <end position="1457"/>
    </location>
</feature>
<feature type="short sequence motif" description="Cell attachment site" evidence="2">
    <location>
        <begin position="94"/>
        <end position="96"/>
    </location>
</feature>
<feature type="short sequence motif" description="Cell attachment site" evidence="2">
    <location>
        <begin position="145"/>
        <end position="147"/>
    </location>
</feature>
<feature type="short sequence motif" description="Cell attachment site" evidence="2">
    <location>
        <begin position="189"/>
        <end position="191"/>
    </location>
</feature>
<feature type="short sequence motif" description="Cell attachment site" evidence="2">
    <location>
        <begin position="310"/>
        <end position="312"/>
    </location>
</feature>
<feature type="short sequence motif" description="Cell attachment site" evidence="2">
    <location>
        <begin position="724"/>
        <end position="726"/>
    </location>
</feature>
<feature type="short sequence motif" description="Cell attachment site" evidence="2">
    <location>
        <begin position="785"/>
        <end position="787"/>
    </location>
</feature>
<feature type="short sequence motif" description="Cell attachment site" evidence="2">
    <location>
        <begin position="989"/>
        <end position="991"/>
    </location>
</feature>
<feature type="short sequence motif" description="Cell attachment site" evidence="2">
    <location>
        <begin position="1212"/>
        <end position="1214"/>
    </location>
</feature>
<feature type="compositionally biased region" description="Pro residues" evidence="4">
    <location>
        <begin position="66"/>
        <end position="75"/>
    </location>
</feature>
<feature type="compositionally biased region" description="Low complexity" evidence="4">
    <location>
        <begin position="76"/>
        <end position="88"/>
    </location>
</feature>
<feature type="compositionally biased region" description="Gly residues" evidence="4">
    <location>
        <begin position="149"/>
        <end position="164"/>
    </location>
</feature>
<feature type="compositionally biased region" description="Gly residues" evidence="4">
    <location>
        <begin position="199"/>
        <end position="208"/>
    </location>
</feature>
<feature type="compositionally biased region" description="Low complexity" evidence="4">
    <location>
        <begin position="412"/>
        <end position="434"/>
    </location>
</feature>
<feature type="compositionally biased region" description="Pro residues" evidence="4">
    <location>
        <begin position="498"/>
        <end position="507"/>
    </location>
</feature>
<feature type="compositionally biased region" description="Pro residues" evidence="4">
    <location>
        <begin position="529"/>
        <end position="540"/>
    </location>
</feature>
<feature type="compositionally biased region" description="Basic and acidic residues" evidence="4">
    <location>
        <begin position="586"/>
        <end position="607"/>
    </location>
</feature>
<feature type="compositionally biased region" description="Low complexity" evidence="4">
    <location>
        <begin position="644"/>
        <end position="655"/>
    </location>
</feature>
<feature type="compositionally biased region" description="Pro residues" evidence="4">
    <location>
        <begin position="681"/>
        <end position="690"/>
    </location>
</feature>
<feature type="compositionally biased region" description="Gly residues" evidence="4">
    <location>
        <begin position="849"/>
        <end position="858"/>
    </location>
</feature>
<feature type="compositionally biased region" description="Low complexity" evidence="4">
    <location>
        <begin position="866"/>
        <end position="880"/>
    </location>
</feature>
<feature type="compositionally biased region" description="Low complexity" evidence="4">
    <location>
        <begin position="907"/>
        <end position="917"/>
    </location>
</feature>
<feature type="compositionally biased region" description="Pro residues" evidence="4">
    <location>
        <begin position="1023"/>
        <end position="1032"/>
    </location>
</feature>
<feature type="compositionally biased region" description="Low complexity" evidence="4">
    <location>
        <begin position="1108"/>
        <end position="1117"/>
    </location>
</feature>
<feature type="compositionally biased region" description="Pro residues" evidence="4">
    <location>
        <begin position="1119"/>
        <end position="1131"/>
    </location>
</feature>
<feature type="compositionally biased region" description="Pro residues" evidence="4">
    <location>
        <begin position="1220"/>
        <end position="1243"/>
    </location>
</feature>
<feature type="compositionally biased region" description="Pro residues" evidence="4">
    <location>
        <begin position="1256"/>
        <end position="1280"/>
    </location>
</feature>
<feature type="compositionally biased region" description="Pro residues" evidence="4">
    <location>
        <begin position="1297"/>
        <end position="1309"/>
    </location>
</feature>
<feature type="compositionally biased region" description="Pro residues" evidence="4">
    <location>
        <begin position="1338"/>
        <end position="1353"/>
    </location>
</feature>
<feature type="compositionally biased region" description="Pro residues" evidence="4">
    <location>
        <begin position="1443"/>
        <end position="1452"/>
    </location>
</feature>
<feature type="site" description="Cleavage; by collagenase" evidence="1">
    <location>
        <begin position="1206"/>
        <end position="1207"/>
    </location>
</feature>
<feature type="glycosylation site" description="N-linked (GlcNAc...) asparagine" evidence="2">
    <location>
        <position position="142"/>
    </location>
</feature>
<feature type="glycosylation site" description="N-linked (GlcNAc...) asparagine" evidence="2">
    <location>
        <position position="669"/>
    </location>
</feature>
<feature type="disulfide bond" description="Or C-1480 with C-1566" evidence="3">
    <location>
        <begin position="1480"/>
        <end position="1569"/>
    </location>
</feature>
<feature type="disulfide bond" description="Or C-1513 with C-1569" evidence="3">
    <location>
        <begin position="1513"/>
        <end position="1566"/>
    </location>
</feature>
<feature type="disulfide bond" evidence="3">
    <location>
        <begin position="1525"/>
        <end position="1531"/>
    </location>
</feature>
<feature type="disulfide bond" description="Or C-1588 with C-1683" evidence="3">
    <location>
        <begin position="1588"/>
        <end position="1686"/>
    </location>
</feature>
<feature type="disulfide bond" description="Or C-1622 with C-1686" evidence="3">
    <location>
        <begin position="1622"/>
        <end position="1683"/>
    </location>
</feature>
<feature type="disulfide bond" evidence="3">
    <location>
        <begin position="1634"/>
        <end position="1641"/>
    </location>
</feature>
<feature type="sequence variant" id="VAR_031622" description="In dbSNP:rs16823264." evidence="5">
    <original>I</original>
    <variation>T</variation>
    <location>
        <position position="6"/>
    </location>
</feature>
<feature type="sequence variant" id="VAR_031623" description="In BFH1; dbSNP:rs1553696235." evidence="6">
    <original>G</original>
    <variation>E</variation>
    <location>
        <position position="116"/>
    </location>
</feature>
<feature type="sequence variant" id="VAR_008148" description="In ATS2." evidence="13">
    <location>
        <begin position="441"/>
        <end position="446"/>
    </location>
</feature>
<feature type="sequence variant" id="VAR_022069" description="In dbSNP:rs2229814." evidence="5 6">
    <original>P</original>
    <variation>S</variation>
    <location>
        <position position="482"/>
    </location>
</feature>
<feature type="sequence variant" id="VAR_008149" description="In dbSNP:rs1800516." evidence="5 13">
    <original>G</original>
    <variation>A</variation>
    <location>
        <position position="545"/>
    </location>
</feature>
<feature type="sequence variant" id="VAR_008150" evidence="13">
    <original>E</original>
    <variation>Q</variation>
    <location>
        <position position="570"/>
    </location>
</feature>
<feature type="sequence variant" id="VAR_055680" description="In dbSNP:rs35998949.">
    <original>E</original>
    <variation>G</variation>
    <location>
        <position position="594"/>
    </location>
</feature>
<feature type="sequence variant" id="VAR_055681" description="In dbSNP:rs34236495.">
    <original>V</original>
    <variation>I</variation>
    <location>
        <position position="670"/>
    </location>
</feature>
<feature type="sequence variant" id="VAR_055682" description="In dbSNP:rs36121515.">
    <original>P</original>
    <variation>L</variation>
    <location>
        <position position="759"/>
    </location>
</feature>
<feature type="sequence variant" id="VAR_001912" description="In BFH1; dbSNP:rs121912860." evidence="12">
    <original>G</original>
    <variation>E</variation>
    <location>
        <position position="897"/>
    </location>
</feature>
<feature type="sequence variant" id="VAR_008151" description="In dbSNP:rs75875272." evidence="13">
    <original>A</original>
    <variation>T</variation>
    <location>
        <position position="931"/>
    </location>
</feature>
<feature type="sequence variant" id="VAR_031624" description="In BFH1; dbSNP:rs769783985." evidence="5 6">
    <original>G</original>
    <variation>R</variation>
    <location>
        <position position="960"/>
    </location>
</feature>
<feature type="sequence variant" id="VAR_031625" description="In BFH1; dbSNP:rs13027659." evidence="6">
    <original>G</original>
    <variation>E</variation>
    <location>
        <position position="999"/>
    </location>
</feature>
<feature type="sequence variant" id="VAR_008152" description="In dbSNP:rs1800517." evidence="8 13">
    <original>P</original>
    <variation>L</variation>
    <location>
        <position position="1004"/>
    </location>
</feature>
<feature type="sequence variant" id="VAR_008153" description="In ATS2; dbSNP:rs772699709." evidence="13">
    <original>G</original>
    <variation>V</variation>
    <location>
        <position position="1030"/>
    </location>
</feature>
<feature type="sequence variant" id="VAR_031626" description="In BFH1." evidence="6">
    <original>P</original>
    <variation>L</variation>
    <location>
        <position position="1132"/>
    </location>
</feature>
<feature type="sequence variant" id="VAR_001913" description="In ATS2; dbSNP:rs121912858." evidence="9">
    <original>G</original>
    <variation>S</variation>
    <location>
        <position position="1201"/>
    </location>
</feature>
<feature type="sequence variant" id="VAR_031627" description="In dbSNP:rs2229813." evidence="8 11 13">
    <original>V</original>
    <variation>M</variation>
    <location>
        <position position="1327"/>
    </location>
</feature>
<feature type="sequence variant" id="VAR_008154" evidence="13">
    <original>P</original>
    <variation>S</variation>
    <location>
        <position position="1402"/>
    </location>
</feature>
<feature type="sequence variant" id="VAR_031628" description="In dbSNP:rs3752895." evidence="8 11 13">
    <original>S</original>
    <variation>P</variation>
    <location>
        <position position="1403"/>
    </location>
</feature>
<feature type="sequence variant" id="VAR_008155" description="In ATS2; dbSNP:rs121912863." evidence="13">
    <original>P</original>
    <variation>L</variation>
    <location>
        <position position="1572"/>
    </location>
</feature>
<feature type="sequence conflict" description="In Ref. 3; AAY24061." evidence="14" ref="3">
    <original>GPR</original>
    <variation>AIS</variation>
    <location>
        <begin position="1361"/>
        <end position="1363"/>
    </location>
</feature>
<feature type="sequence conflict" description="In Ref. 5; BAA04214." evidence="14" ref="5">
    <original>LQ</original>
    <variation>FE</variation>
    <location>
        <begin position="1659"/>
        <end position="1660"/>
    </location>
</feature>
<feature type="strand" evidence="15">
    <location>
        <begin position="1465"/>
        <end position="1471"/>
    </location>
</feature>
<feature type="strand" evidence="15">
    <location>
        <begin position="1473"/>
        <end position="1476"/>
    </location>
</feature>
<feature type="strand" evidence="15">
    <location>
        <begin position="1486"/>
        <end position="1498"/>
    </location>
</feature>
<feature type="strand" evidence="15">
    <location>
        <begin position="1501"/>
        <end position="1504"/>
    </location>
</feature>
<feature type="helix" evidence="15">
    <location>
        <begin position="1510"/>
        <end position="1512"/>
    </location>
</feature>
<feature type="strand" evidence="15">
    <location>
        <begin position="1513"/>
        <end position="1516"/>
    </location>
</feature>
<feature type="strand" evidence="15">
    <location>
        <begin position="1522"/>
        <end position="1526"/>
    </location>
</feature>
<feature type="turn" evidence="15">
    <location>
        <begin position="1527"/>
        <end position="1529"/>
    </location>
</feature>
<feature type="strand" evidence="15">
    <location>
        <begin position="1530"/>
        <end position="1534"/>
    </location>
</feature>
<feature type="strand" evidence="15">
    <location>
        <begin position="1539"/>
        <end position="1544"/>
    </location>
</feature>
<feature type="helix" evidence="15">
    <location>
        <begin position="1556"/>
        <end position="1562"/>
    </location>
</feature>
<feature type="strand" evidence="15">
    <location>
        <begin position="1565"/>
        <end position="1579"/>
    </location>
</feature>
<feature type="strand" evidence="15">
    <location>
        <begin position="1581"/>
        <end position="1584"/>
    </location>
</feature>
<feature type="strand" evidence="15">
    <location>
        <begin position="1592"/>
        <end position="1605"/>
    </location>
</feature>
<feature type="strand" evidence="15">
    <location>
        <begin position="1611"/>
        <end position="1613"/>
    </location>
</feature>
<feature type="helix" evidence="15">
    <location>
        <begin position="1619"/>
        <end position="1621"/>
    </location>
</feature>
<feature type="strand" evidence="15">
    <location>
        <begin position="1622"/>
        <end position="1625"/>
    </location>
</feature>
<feature type="strand" evidence="15">
    <location>
        <begin position="1631"/>
        <end position="1634"/>
    </location>
</feature>
<feature type="helix" evidence="15">
    <location>
        <begin position="1636"/>
        <end position="1638"/>
    </location>
</feature>
<feature type="strand" evidence="15">
    <location>
        <begin position="1640"/>
        <end position="1642"/>
    </location>
</feature>
<feature type="strand" evidence="15">
    <location>
        <begin position="1648"/>
        <end position="1653"/>
    </location>
</feature>
<feature type="helix" evidence="15">
    <location>
        <begin position="1657"/>
        <end position="1659"/>
    </location>
</feature>
<feature type="turn" evidence="15">
    <location>
        <begin position="1660"/>
        <end position="1662"/>
    </location>
</feature>
<feature type="strand" evidence="15">
    <location>
        <begin position="1668"/>
        <end position="1670"/>
    </location>
</feature>
<feature type="helix" evidence="15">
    <location>
        <begin position="1673"/>
        <end position="1677"/>
    </location>
</feature>
<feature type="strand" evidence="15">
    <location>
        <begin position="1682"/>
        <end position="1687"/>
    </location>
</feature>
<protein>
    <recommendedName>
        <fullName>Collagen alpha-4(IV) chain</fullName>
    </recommendedName>
</protein>
<reference key="1">
    <citation type="journal article" date="1994" name="J. Biol. Chem.">
        <title>Complete primary structure of the human type IV collagen alpha 4(IV) chain. Comparison with structure and expression of the other alpha (IV) chains.</title>
        <authorList>
            <person name="Leinonen A."/>
            <person name="Mariyama M."/>
            <person name="Mochizuki T."/>
            <person name="Tryggvason K."/>
            <person name="Reeders S.T."/>
        </authorList>
    </citation>
    <scope>NUCLEOTIDE SEQUENCE [MRNA]</scope>
    <scope>TISSUE SPECIFICITY</scope>
    <scope>VARIANTS LEU-1004; MET-1327 AND PRO-1403</scope>
    <source>
        <tissue>Kidney</tissue>
    </source>
</reference>
<reference key="2">
    <citation type="journal article" date="1998" name="Am. J. Hum. Genet.">
        <title>Determination of the genomic structure of the COL4A4 gene and of novel mutations causing autosomal recessive Alport syndrome.</title>
        <authorList>
            <person name="Boye E."/>
            <person name="Mollet G."/>
            <person name="Forestier L."/>
            <person name="Cohen-Solal L."/>
            <person name="Heidet L."/>
            <person name="Cochat P."/>
            <person name="Gruenfeld J.-P."/>
            <person name="Palcoux J.-B."/>
            <person name="Gubler M.-C."/>
            <person name="Antignac C."/>
        </authorList>
    </citation>
    <scope>NUCLEOTIDE SEQUENCE [GENOMIC DNA]</scope>
    <scope>INVOLVEMENT IN ATS2</scope>
    <scope>VARIANTS ATS2 441-PRO--ALA-446 DEL; VAL-1030 AND LEU-1572</scope>
    <scope>VARIANTS ALA-545; GLN-570; THR-931; LEU-1004; MET-1327; SER-1402 AND PRO-1403</scope>
</reference>
<reference key="3">
    <citation type="journal article" date="2005" name="Nature">
        <title>Generation and annotation of the DNA sequences of human chromosomes 2 and 4.</title>
        <authorList>
            <person name="Hillier L.W."/>
            <person name="Graves T.A."/>
            <person name="Fulton R.S."/>
            <person name="Fulton L.A."/>
            <person name="Pepin K.H."/>
            <person name="Minx P."/>
            <person name="Wagner-McPherson C."/>
            <person name="Layman D."/>
            <person name="Wylie K."/>
            <person name="Sekhon M."/>
            <person name="Becker M.C."/>
            <person name="Fewell G.A."/>
            <person name="Delehaunty K.D."/>
            <person name="Miner T.L."/>
            <person name="Nash W.E."/>
            <person name="Kremitzki C."/>
            <person name="Oddy L."/>
            <person name="Du H."/>
            <person name="Sun H."/>
            <person name="Bradshaw-Cordum H."/>
            <person name="Ali J."/>
            <person name="Carter J."/>
            <person name="Cordes M."/>
            <person name="Harris A."/>
            <person name="Isak A."/>
            <person name="van Brunt A."/>
            <person name="Nguyen C."/>
            <person name="Du F."/>
            <person name="Courtney L."/>
            <person name="Kalicki J."/>
            <person name="Ozersky P."/>
            <person name="Abbott S."/>
            <person name="Armstrong J."/>
            <person name="Belter E.A."/>
            <person name="Caruso L."/>
            <person name="Cedroni M."/>
            <person name="Cotton M."/>
            <person name="Davidson T."/>
            <person name="Desai A."/>
            <person name="Elliott G."/>
            <person name="Erb T."/>
            <person name="Fronick C."/>
            <person name="Gaige T."/>
            <person name="Haakenson W."/>
            <person name="Haglund K."/>
            <person name="Holmes A."/>
            <person name="Harkins R."/>
            <person name="Kim K."/>
            <person name="Kruchowski S.S."/>
            <person name="Strong C.M."/>
            <person name="Grewal N."/>
            <person name="Goyea E."/>
            <person name="Hou S."/>
            <person name="Levy A."/>
            <person name="Martinka S."/>
            <person name="Mead K."/>
            <person name="McLellan M.D."/>
            <person name="Meyer R."/>
            <person name="Randall-Maher J."/>
            <person name="Tomlinson C."/>
            <person name="Dauphin-Kohlberg S."/>
            <person name="Kozlowicz-Reilly A."/>
            <person name="Shah N."/>
            <person name="Swearengen-Shahid S."/>
            <person name="Snider J."/>
            <person name="Strong J.T."/>
            <person name="Thompson J."/>
            <person name="Yoakum M."/>
            <person name="Leonard S."/>
            <person name="Pearman C."/>
            <person name="Trani L."/>
            <person name="Radionenko M."/>
            <person name="Waligorski J.E."/>
            <person name="Wang C."/>
            <person name="Rock S.M."/>
            <person name="Tin-Wollam A.-M."/>
            <person name="Maupin R."/>
            <person name="Latreille P."/>
            <person name="Wendl M.C."/>
            <person name="Yang S.-P."/>
            <person name="Pohl C."/>
            <person name="Wallis J.W."/>
            <person name="Spieth J."/>
            <person name="Bieri T.A."/>
            <person name="Berkowicz N."/>
            <person name="Nelson J.O."/>
            <person name="Osborne J."/>
            <person name="Ding L."/>
            <person name="Meyer R."/>
            <person name="Sabo A."/>
            <person name="Shotland Y."/>
            <person name="Sinha P."/>
            <person name="Wohldmann P.E."/>
            <person name="Cook L.L."/>
            <person name="Hickenbotham M.T."/>
            <person name="Eldred J."/>
            <person name="Williams D."/>
            <person name="Jones T.A."/>
            <person name="She X."/>
            <person name="Ciccarelli F.D."/>
            <person name="Izaurralde E."/>
            <person name="Taylor J."/>
            <person name="Schmutz J."/>
            <person name="Myers R.M."/>
            <person name="Cox D.R."/>
            <person name="Huang X."/>
            <person name="McPherson J.D."/>
            <person name="Mardis E.R."/>
            <person name="Clifton S.W."/>
            <person name="Warren W.C."/>
            <person name="Chinwalla A.T."/>
            <person name="Eddy S.R."/>
            <person name="Marra M.A."/>
            <person name="Ovcharenko I."/>
            <person name="Furey T.S."/>
            <person name="Miller W."/>
            <person name="Eichler E.E."/>
            <person name="Bork P."/>
            <person name="Suyama M."/>
            <person name="Torrents D."/>
            <person name="Waterston R.H."/>
            <person name="Wilson R.K."/>
        </authorList>
    </citation>
    <scope>NUCLEOTIDE SEQUENCE [LARGE SCALE GENOMIC DNA]</scope>
</reference>
<reference key="4">
    <citation type="journal article" date="1998" name="FEBS Lett.">
        <title>Two genes, COL4A3 and COL4A4 coding for the human alpha3(IV) and alpha4(IV) collagen chains are arranged head-to-head on chromosome 2q36.</title>
        <authorList>
            <person name="Momota R."/>
            <person name="Sugimoto M."/>
            <person name="Oohashi T."/>
            <person name="Kigasawa K."/>
            <person name="Yoshioka H."/>
            <person name="Ninomiya Y."/>
        </authorList>
    </citation>
    <scope>NUCLEOTIDE SEQUENCE [GENOMIC DNA] OF 1-23</scope>
</reference>
<reference key="5">
    <citation type="journal article" date="1993" name="FEBS Lett.">
        <title>cDNA isolation and partial gene structure of the human alpha 4(IV) collagen chain.</title>
        <authorList>
            <person name="Sugimoto M."/>
            <person name="Oohashi T."/>
            <person name="Yoshioka H."/>
            <person name="Matsuo N."/>
            <person name="Ninomiya Y."/>
        </authorList>
    </citation>
    <scope>NUCLEOTIDE SEQUENCE [MRNA] OF 1219-1690</scope>
    <scope>VARIANTS MET-1327 AND PRO-1403</scope>
    <source>
        <tissue>Eye</tissue>
    </source>
</reference>
<reference key="6">
    <citation type="journal article" date="1992" name="J. Biol. Chem.">
        <title>Isolation and sequencing of cDNAs and genomic DNAs encoding the alpha 4 chain of basement membrane collagen type IV and assignment of the gene to the distal long arm of human chromosome 2.</title>
        <authorList>
            <person name="Kamagata Y."/>
            <person name="Mattei M.-G."/>
            <person name="Ninomiya Y."/>
        </authorList>
    </citation>
    <scope>NUCLEOTIDE SEQUENCE [GENOMIC DNA] OF 1407-1507</scope>
</reference>
<reference key="7">
    <citation type="journal article" date="1994" name="J. Biol. Chem.">
        <title>Complete primary structure of the human alpha 3(IV) collagen chain. Coexpression of the alpha 3(IV) and alpha 4(IV) collagen chains in human tissues.</title>
        <authorList>
            <person name="Mariyama M."/>
            <person name="Leinonen A."/>
            <person name="Mochizuki T."/>
            <person name="Tryggvason K."/>
            <person name="Reeders S.T."/>
        </authorList>
    </citation>
    <scope>TISSUE SPECIFICITY</scope>
</reference>
<reference key="8">
    <citation type="journal article" date="2002" name="J. Biol. Chem.">
        <title>Quaternary organization of the goodpasture autoantigen, the alpha 3(IV) collagen chain. Sequestration of two cryptic autoepitopes by intrapromoter interactions with the alpha4 and alpha5 NC1 domains.</title>
        <authorList>
            <person name="Borza D.B."/>
            <person name="Bondar O."/>
            <person name="Todd P."/>
            <person name="Sundaramoorthy M."/>
            <person name="Sado Y."/>
            <person name="Ninomiya Y."/>
            <person name="Hudson B.G."/>
        </authorList>
    </citation>
    <scope>HEXAMERIZATION</scope>
</reference>
<reference key="9">
    <citation type="journal article" date="2018" name="Acta Biomater.">
        <title>Extracellular matrix component expression in human pluripotent stem cell-derived retinal organoids recapitulates retinogenesis in vivo and reveals an important role for IMPG1 and CD44 in the development of photoreceptors and interphotoreceptor matrix.</title>
        <authorList>
            <person name="Felemban M."/>
            <person name="Dorgau B."/>
            <person name="Hunt N.C."/>
            <person name="Hallam D."/>
            <person name="Zerti D."/>
            <person name="Bauer R."/>
            <person name="Ding Y."/>
            <person name="Collin J."/>
            <person name="Steel D."/>
            <person name="Krasnogor N."/>
            <person name="Al-Aama J."/>
            <person name="Lindsay S."/>
            <person name="Mellough C."/>
            <person name="Lako M."/>
        </authorList>
    </citation>
    <scope>TISSUE SPECIFICITY</scope>
    <scope>DEVELOPMENTAL STAGE</scope>
</reference>
<reference key="10">
    <citation type="journal article" date="1997" name="Hum. Mutat.">
        <title>The clinical spectrum of type IV collagen mutations.</title>
        <authorList>
            <person name="Lemmink H.H."/>
            <person name="Schroeder C.H."/>
            <person name="Monnens L.A.H."/>
            <person name="Smeets H.J.M."/>
        </authorList>
    </citation>
    <scope>REVIEW ON VARIANTS</scope>
</reference>
<reference key="11">
    <citation type="journal article" date="1994" name="Nat. Genet.">
        <title>Identification of mutations in the alpha 3(IV) and alpha 4(IV) collagen genes in autosomal recessive Alport syndrome.</title>
        <authorList>
            <person name="Mochizuki T."/>
            <person name="Lemmink H.H."/>
            <person name="Mariyama M."/>
            <person name="Antignac C."/>
            <person name="Gubler M.-C."/>
            <person name="Pirson Y."/>
            <person name="Verellen-Dumoulin C."/>
            <person name="Chan B."/>
            <person name="Schroeder C.H."/>
            <person name="Smeets H.J.M."/>
            <person name="Reeders S.T."/>
        </authorList>
    </citation>
    <scope>VARIANT ATS2 SER-1201</scope>
</reference>
<reference key="12">
    <citation type="journal article" date="1996" name="J. Clin. Invest.">
        <title>Benign familial hematuria due to mutation of the type IV collagen alpha4 gene.</title>
        <authorList>
            <person name="Lemmink H.H."/>
            <person name="Nillesen W.N."/>
            <person name="Mochizuki T."/>
            <person name="Schroeder C.H."/>
            <person name="Brunner H.G."/>
            <person name="van Oost B.A."/>
            <person name="Monnens L.A.H."/>
            <person name="Smeets H.J.M."/>
        </authorList>
    </citation>
    <scope>VARIANT BFH1 GLU-897</scope>
</reference>
<reference key="13">
    <citation type="journal article" date="2002" name="J. Am. Soc. Nephrol.">
        <title>Mutations in the COL4A4 and COL4A3 genes cause familial benign hematuria.</title>
        <authorList>
            <person name="Badenas C."/>
            <person name="Praga M."/>
            <person name="Tazon B."/>
            <person name="Heidet L."/>
            <person name="Arrondel C."/>
            <person name="Armengol A."/>
            <person name="Andres A."/>
            <person name="Morales E."/>
            <person name="Camacho J.A."/>
            <person name="Lens X."/>
            <person name="Davila S."/>
            <person name="Mila M."/>
            <person name="Antignac C."/>
            <person name="Darnell A."/>
            <person name="Torra R."/>
        </authorList>
    </citation>
    <scope>VARIANT BFH1 ARG-960</scope>
    <scope>VARIANTS THR-6; SER-482 AND ALA-545</scope>
</reference>
<reference key="14">
    <citation type="journal article" date="2003" name="Kidney Int.">
        <title>Mutations in the COL4A4 gene in thin basement membrane disease.</title>
        <authorList>
            <person name="Buzza M."/>
            <person name="Dagher H."/>
            <person name="Wang Y.Y."/>
            <person name="Wilson D."/>
            <person name="Babon J.J."/>
            <person name="Cotton R.G."/>
            <person name="Savige J."/>
        </authorList>
    </citation>
    <scope>VARIANTS BFH1 GLU-116; ARG-960; GLU-999 AND LEU-1132</scope>
    <scope>VARIANT SER-482</scope>
</reference>
<comment type="function">
    <text>Type IV collagen is the major structural component of glomerular basement membranes (GBM), forming a 'chicken-wire' meshwork together with laminins, proteoglycans and entactin/nidogen.</text>
</comment>
<comment type="subunit">
    <text evidence="1">There are six type IV collagen isoforms, alpha 1(IV)-alpha 6(IV), each of which can form a triple helix structure with 2 other chains to generate type IV collagen network. The alpha 3(IV) chain forms a triple helical protomer with alpha 4(IV) and alpha 5(IV); this triple helical structure dimerizes through NC1-NC1 domain interactions such that the alpha 3(IV), alpha 4(IV) and alpha 5(IV) chains of one protomer connect with the alpha 5(IV), alpha 4(IV) and alpha 3(IV) chains of the opposite protomer, respectively. Associates with LAMB2 at the neuromuscular junction and in GBM (By similarity).</text>
</comment>
<comment type="subcellular location">
    <subcellularLocation>
        <location evidence="3">Secreted</location>
        <location evidence="3">Extracellular space</location>
        <location evidence="3">Extracellular matrix</location>
        <location evidence="3">Basement membrane</location>
    </subcellularLocation>
    <text evidence="1">Colocalizes with COL4A4 and COL4A5 in GBM, tubular basement membrane (TBM) and synaptic basal lamina (BL).</text>
</comment>
<comment type="tissue specificity">
    <text evidence="7 8 10">Expressed in Bruch's membrane, outer plexiform layer, inner nuclear layer, inner plexiform layer, ganglion cell layer, inner limiting membrane and around the blood vessels of the retina (at protein level) (PubMed:29777959). Alpha 3 and alpha 4 type IV collagens are colocalized and present in kidney, eye, basement membranes of lens capsule, cochlea, lung, skeletal muscle, aorta, synaptic fibers, fetal kidney and fetal lung. PubMed:8083201 reports similar levels of expression of alpha 3 and alpha 4 type IV collagens in kidney, but PubMed:7523402 reports that in kidney levels of alpha 3 type IV collagen are significantly lower than those of alpha 4 type IV collagen. Highest levels of expression of alpha 4 type IV collagen are detected in kidney, calvaria, neuroretina and cardiac muscle. Lower levels of expression are observed in brain, lung and thymus, and no expression is detected in choroid plexus, liver, adrenal, pancreas, ileum or skin.</text>
</comment>
<comment type="developmental stage">
    <text evidence="7">At 6 weeks post-conception (WPC) expressed in the hyaloid artery and lens capsule (at protein level) (PubMed:29777959). Expressed between 6 and 19 WPC in the choroid and Bruch's membrane with faint expression in the retinal pigment epithelium, outer neuroblastic zone, inner plexiform layer, and the inner neuroblastic zone (at protein level) (PubMed:29777959).</text>
</comment>
<comment type="domain">
    <text>Alpha chains of type IV collagen have a non-collagenous domain (NC1) at their C-terminus, frequent interruptions of the G-X-Y repeats in the long central triple-helical domain (which may cause flexibility in the triple helix), and a short N-terminal triple-helical 7S domain.</text>
</comment>
<comment type="PTM">
    <text>Prolines at the third position of the tripeptide repeating unit (G-X-Y) are hydroxylated in some or all of the chains.</text>
</comment>
<comment type="PTM">
    <text>Type IV collagens contain numerous cysteine residues which are involved in inter- and intramolecular disulfide bonding. 12 of these, located in the NC1 domain, are conserved in all known type IV collagens.</text>
</comment>
<comment type="PTM">
    <text evidence="1">The trimeric structure of the NC1 domains is stabilized by covalent bonds between Lys and Met residues.</text>
</comment>
<comment type="disease" evidence="9 13">
    <disease id="DI-00080">
        <name>Alport syndrome 2, autosomal recessive</name>
        <acronym>ATS2</acronym>
        <description>A syndrome characterized by progressive glomerulonephritis, glomerular basement membrane defects, renal failure, sensorineural deafness and specific eye abnormalities (lenticonous and macular flecks). The disorder shows considerable heterogeneity in that families differ in the age of end-stage renal disease and the occurrence of deafness.</description>
        <dbReference type="MIM" id="203780"/>
    </disease>
    <text>The disease is caused by variants affecting the gene represented in this entry.</text>
</comment>
<comment type="disease" evidence="5 6 12">
    <disease id="DI-01271">
        <name>Hematuria, benign familial, 1</name>
        <acronym>BFH1</acronym>
        <description>An autosomal dominant condition characterized by non-progressive isolated microscopic hematuria that does not result in renal failure. It is characterized pathologically by thinning of the glomerular basement membrane.</description>
        <dbReference type="MIM" id="141200"/>
    </disease>
    <text>The disease is caused by variants affecting the gene represented in this entry.</text>
</comment>
<comment type="similarity">
    <text evidence="3">Belongs to the type IV collagen family.</text>
</comment>
<keyword id="KW-0002">3D-structure</keyword>
<keyword id="KW-0023">Alport syndrome</keyword>
<keyword id="KW-0084">Basement membrane</keyword>
<keyword id="KW-0176">Collagen</keyword>
<keyword id="KW-0209">Deafness</keyword>
<keyword id="KW-0225">Disease variant</keyword>
<keyword id="KW-1015">Disulfide bond</keyword>
<keyword id="KW-0272">Extracellular matrix</keyword>
<keyword id="KW-0325">Glycoprotein</keyword>
<keyword id="KW-0379">Hydroxylation</keyword>
<keyword id="KW-1267">Proteomics identification</keyword>
<keyword id="KW-1185">Reference proteome</keyword>
<keyword id="KW-0677">Repeat</keyword>
<keyword id="KW-0964">Secreted</keyword>
<keyword id="KW-0732">Signal</keyword>
<proteinExistence type="evidence at protein level"/>
<name>CO4A4_HUMAN</name>
<accession>P53420</accession>
<accession>A8MTZ1</accession>
<accession>Q53RW9</accession>
<accession>Q53S42</accession>
<accession>Q53WR1</accession>
<dbReference type="EMBL" id="X81053">
    <property type="protein sequence ID" value="CAA56943.1"/>
    <property type="molecule type" value="mRNA"/>
</dbReference>
<dbReference type="EMBL" id="Y17397">
    <property type="protein sequence ID" value="CAA76763.1"/>
    <property type="molecule type" value="Genomic_DNA"/>
</dbReference>
<dbReference type="EMBL" id="Y17398">
    <property type="protein sequence ID" value="CAA76763.1"/>
    <property type="status" value="JOINED"/>
    <property type="molecule type" value="Genomic_DNA"/>
</dbReference>
<dbReference type="EMBL" id="Y17399">
    <property type="protein sequence ID" value="CAA76763.1"/>
    <property type="status" value="JOINED"/>
    <property type="molecule type" value="Genomic_DNA"/>
</dbReference>
<dbReference type="EMBL" id="Y17400">
    <property type="protein sequence ID" value="CAA76763.1"/>
    <property type="status" value="JOINED"/>
    <property type="molecule type" value="Genomic_DNA"/>
</dbReference>
<dbReference type="EMBL" id="Y17401">
    <property type="protein sequence ID" value="CAA76763.1"/>
    <property type="status" value="JOINED"/>
    <property type="molecule type" value="Genomic_DNA"/>
</dbReference>
<dbReference type="EMBL" id="Y17402">
    <property type="protein sequence ID" value="CAA76763.1"/>
    <property type="status" value="JOINED"/>
    <property type="molecule type" value="Genomic_DNA"/>
</dbReference>
<dbReference type="EMBL" id="Y17403">
    <property type="protein sequence ID" value="CAA76763.1"/>
    <property type="status" value="JOINED"/>
    <property type="molecule type" value="Genomic_DNA"/>
</dbReference>
<dbReference type="EMBL" id="Y17404">
    <property type="protein sequence ID" value="CAA76763.1"/>
    <property type="status" value="JOINED"/>
    <property type="molecule type" value="Genomic_DNA"/>
</dbReference>
<dbReference type="EMBL" id="Y17405">
    <property type="protein sequence ID" value="CAA76763.1"/>
    <property type="status" value="JOINED"/>
    <property type="molecule type" value="Genomic_DNA"/>
</dbReference>
<dbReference type="EMBL" id="Y17406">
    <property type="protein sequence ID" value="CAA76763.1"/>
    <property type="status" value="JOINED"/>
    <property type="molecule type" value="Genomic_DNA"/>
</dbReference>
<dbReference type="EMBL" id="Y17407">
    <property type="protein sequence ID" value="CAA76763.1"/>
    <property type="status" value="JOINED"/>
    <property type="molecule type" value="Genomic_DNA"/>
</dbReference>
<dbReference type="EMBL" id="Y17408">
    <property type="protein sequence ID" value="CAA76763.1"/>
    <property type="status" value="JOINED"/>
    <property type="molecule type" value="Genomic_DNA"/>
</dbReference>
<dbReference type="EMBL" id="Y17409">
    <property type="protein sequence ID" value="CAA76763.1"/>
    <property type="status" value="JOINED"/>
    <property type="molecule type" value="Genomic_DNA"/>
</dbReference>
<dbReference type="EMBL" id="Y17410">
    <property type="protein sequence ID" value="CAA76763.1"/>
    <property type="status" value="JOINED"/>
    <property type="molecule type" value="Genomic_DNA"/>
</dbReference>
<dbReference type="EMBL" id="Y17411">
    <property type="protein sequence ID" value="CAA76763.1"/>
    <property type="status" value="JOINED"/>
    <property type="molecule type" value="Genomic_DNA"/>
</dbReference>
<dbReference type="EMBL" id="Y17412">
    <property type="protein sequence ID" value="CAA76763.1"/>
    <property type="status" value="JOINED"/>
    <property type="molecule type" value="Genomic_DNA"/>
</dbReference>
<dbReference type="EMBL" id="Y17413">
    <property type="protein sequence ID" value="CAA76763.1"/>
    <property type="status" value="JOINED"/>
    <property type="molecule type" value="Genomic_DNA"/>
</dbReference>
<dbReference type="EMBL" id="Y17427">
    <property type="protein sequence ID" value="CAA76763.1"/>
    <property type="status" value="JOINED"/>
    <property type="molecule type" value="Genomic_DNA"/>
</dbReference>
<dbReference type="EMBL" id="Y17426">
    <property type="protein sequence ID" value="CAA76763.1"/>
    <property type="status" value="JOINED"/>
    <property type="molecule type" value="Genomic_DNA"/>
</dbReference>
<dbReference type="EMBL" id="Y17414">
    <property type="protein sequence ID" value="CAA76763.1"/>
    <property type="status" value="JOINED"/>
    <property type="molecule type" value="Genomic_DNA"/>
</dbReference>
<dbReference type="EMBL" id="Y17415">
    <property type="protein sequence ID" value="CAA76763.1"/>
    <property type="status" value="JOINED"/>
    <property type="molecule type" value="Genomic_DNA"/>
</dbReference>
<dbReference type="EMBL" id="Y17416">
    <property type="protein sequence ID" value="CAA76763.1"/>
    <property type="status" value="JOINED"/>
    <property type="molecule type" value="Genomic_DNA"/>
</dbReference>
<dbReference type="EMBL" id="Y17417">
    <property type="protein sequence ID" value="CAA76763.1"/>
    <property type="status" value="JOINED"/>
    <property type="molecule type" value="Genomic_DNA"/>
</dbReference>
<dbReference type="EMBL" id="Y17418">
    <property type="protein sequence ID" value="CAA76763.1"/>
    <property type="status" value="JOINED"/>
    <property type="molecule type" value="Genomic_DNA"/>
</dbReference>
<dbReference type="EMBL" id="Y17419">
    <property type="protein sequence ID" value="CAA76763.1"/>
    <property type="status" value="JOINED"/>
    <property type="molecule type" value="Genomic_DNA"/>
</dbReference>
<dbReference type="EMBL" id="Y17420">
    <property type="protein sequence ID" value="CAA76763.1"/>
    <property type="status" value="JOINED"/>
    <property type="molecule type" value="Genomic_DNA"/>
</dbReference>
<dbReference type="EMBL" id="Y17443">
    <property type="protein sequence ID" value="CAA76763.1"/>
    <property type="status" value="JOINED"/>
    <property type="molecule type" value="Genomic_DNA"/>
</dbReference>
<dbReference type="EMBL" id="Y17442">
    <property type="protein sequence ID" value="CAA76763.1"/>
    <property type="status" value="JOINED"/>
    <property type="molecule type" value="Genomic_DNA"/>
</dbReference>
<dbReference type="EMBL" id="Y17441">
    <property type="protein sequence ID" value="CAA76763.1"/>
    <property type="status" value="JOINED"/>
    <property type="molecule type" value="Genomic_DNA"/>
</dbReference>
<dbReference type="EMBL" id="Y17440">
    <property type="protein sequence ID" value="CAA76763.1"/>
    <property type="status" value="JOINED"/>
    <property type="molecule type" value="Genomic_DNA"/>
</dbReference>
<dbReference type="EMBL" id="Y17439">
    <property type="protein sequence ID" value="CAA76763.1"/>
    <property type="status" value="JOINED"/>
    <property type="molecule type" value="Genomic_DNA"/>
</dbReference>
<dbReference type="EMBL" id="Y17438">
    <property type="protein sequence ID" value="CAA76763.1"/>
    <property type="status" value="JOINED"/>
    <property type="molecule type" value="Genomic_DNA"/>
</dbReference>
<dbReference type="EMBL" id="Y17437">
    <property type="protein sequence ID" value="CAA76763.1"/>
    <property type="status" value="JOINED"/>
    <property type="molecule type" value="Genomic_DNA"/>
</dbReference>
<dbReference type="EMBL" id="Y17436">
    <property type="protein sequence ID" value="CAA76763.1"/>
    <property type="status" value="JOINED"/>
    <property type="molecule type" value="Genomic_DNA"/>
</dbReference>
<dbReference type="EMBL" id="Y17435">
    <property type="protein sequence ID" value="CAA76763.1"/>
    <property type="status" value="JOINED"/>
    <property type="molecule type" value="Genomic_DNA"/>
</dbReference>
<dbReference type="EMBL" id="Y17434">
    <property type="protein sequence ID" value="CAA76763.1"/>
    <property type="status" value="JOINED"/>
    <property type="molecule type" value="Genomic_DNA"/>
</dbReference>
<dbReference type="EMBL" id="Y17433">
    <property type="protein sequence ID" value="CAA76763.1"/>
    <property type="status" value="JOINED"/>
    <property type="molecule type" value="Genomic_DNA"/>
</dbReference>
<dbReference type="EMBL" id="Y17432">
    <property type="protein sequence ID" value="CAA76763.1"/>
    <property type="status" value="JOINED"/>
    <property type="molecule type" value="Genomic_DNA"/>
</dbReference>
<dbReference type="EMBL" id="Y17431">
    <property type="protein sequence ID" value="CAA76763.1"/>
    <property type="status" value="JOINED"/>
    <property type="molecule type" value="Genomic_DNA"/>
</dbReference>
<dbReference type="EMBL" id="Y17430">
    <property type="protein sequence ID" value="CAA76763.1"/>
    <property type="status" value="JOINED"/>
    <property type="molecule type" value="Genomic_DNA"/>
</dbReference>
<dbReference type="EMBL" id="Y17429">
    <property type="protein sequence ID" value="CAA76763.1"/>
    <property type="status" value="JOINED"/>
    <property type="molecule type" value="Genomic_DNA"/>
</dbReference>
<dbReference type="EMBL" id="Y17428">
    <property type="protein sequence ID" value="CAA76763.1"/>
    <property type="status" value="JOINED"/>
    <property type="molecule type" value="Genomic_DNA"/>
</dbReference>
<dbReference type="EMBL" id="Y17421">
    <property type="protein sequence ID" value="CAA76763.1"/>
    <property type="status" value="JOINED"/>
    <property type="molecule type" value="Genomic_DNA"/>
</dbReference>
<dbReference type="EMBL" id="Y17422">
    <property type="protein sequence ID" value="CAA76763.1"/>
    <property type="status" value="JOINED"/>
    <property type="molecule type" value="Genomic_DNA"/>
</dbReference>
<dbReference type="EMBL" id="Y17423">
    <property type="protein sequence ID" value="CAA76763.1"/>
    <property type="status" value="JOINED"/>
    <property type="molecule type" value="Genomic_DNA"/>
</dbReference>
<dbReference type="EMBL" id="Y17424">
    <property type="protein sequence ID" value="CAA76763.1"/>
    <property type="status" value="JOINED"/>
    <property type="molecule type" value="Genomic_DNA"/>
</dbReference>
<dbReference type="EMBL" id="Y17425">
    <property type="protein sequence ID" value="CAA76763.1"/>
    <property type="status" value="JOINED"/>
    <property type="molecule type" value="Genomic_DNA"/>
</dbReference>
<dbReference type="EMBL" id="AC073149">
    <property type="protein sequence ID" value="AAY24061.1"/>
    <property type="molecule type" value="Genomic_DNA"/>
</dbReference>
<dbReference type="EMBL" id="AC079235">
    <property type="protein sequence ID" value="AAY14670.1"/>
    <property type="molecule type" value="Genomic_DNA"/>
</dbReference>
<dbReference type="EMBL" id="AB008496">
    <property type="protein sequence ID" value="BAA25065.1"/>
    <property type="molecule type" value="Genomic_DNA"/>
</dbReference>
<dbReference type="EMBL" id="D17391">
    <property type="protein sequence ID" value="BAA04214.1"/>
    <property type="molecule type" value="mRNA"/>
</dbReference>
<dbReference type="CCDS" id="CCDS42828.1"/>
<dbReference type="PIR" id="A55360">
    <property type="entry name" value="CGHU1B"/>
</dbReference>
<dbReference type="RefSeq" id="NP_000083.3">
    <property type="nucleotide sequence ID" value="NM_000092.5"/>
</dbReference>
<dbReference type="RefSeq" id="XP_005246338.1">
    <property type="nucleotide sequence ID" value="XM_005246281.4"/>
</dbReference>
<dbReference type="RefSeq" id="XP_047299184.1">
    <property type="nucleotide sequence ID" value="XM_047443228.1"/>
</dbReference>
<dbReference type="PDB" id="5NB1">
    <property type="method" value="X-ray"/>
    <property type="resolution" value="2.82 A"/>
    <property type="chains" value="A/B/C/D/E/F=1461-1690"/>
</dbReference>
<dbReference type="PDB" id="6WKU">
    <property type="method" value="X-ray"/>
    <property type="resolution" value="1.76 A"/>
    <property type="chains" value="A=1465-1687"/>
</dbReference>
<dbReference type="PDBsum" id="5NB1"/>
<dbReference type="PDBsum" id="6WKU"/>
<dbReference type="SMR" id="P53420"/>
<dbReference type="BioGRID" id="107683">
    <property type="interactions" value="11"/>
</dbReference>
<dbReference type="ComplexPortal" id="CPX-1725">
    <property type="entry name" value="Collagen type IV trimer variant 3"/>
</dbReference>
<dbReference type="FunCoup" id="P53420">
    <property type="interactions" value="608"/>
</dbReference>
<dbReference type="IntAct" id="P53420">
    <property type="interactions" value="7"/>
</dbReference>
<dbReference type="MINT" id="P53420"/>
<dbReference type="STRING" id="9606.ENSP00000379866"/>
<dbReference type="ChEMBL" id="CHEMBL3988505"/>
<dbReference type="DrugBank" id="DB06356">
    <property type="generic name" value="TRC093"/>
</dbReference>
<dbReference type="GlyCosmos" id="P53420">
    <property type="glycosylation" value="2 sites, No reported glycans"/>
</dbReference>
<dbReference type="GlyGen" id="P53420">
    <property type="glycosylation" value="3 sites, 1 N-linked glycan (1 site)"/>
</dbReference>
<dbReference type="iPTMnet" id="P53420"/>
<dbReference type="PhosphoSitePlus" id="P53420"/>
<dbReference type="BioMuta" id="COL4A4"/>
<dbReference type="DMDM" id="259016360"/>
<dbReference type="MassIVE" id="P53420"/>
<dbReference type="PaxDb" id="9606-ENSP00000379866"/>
<dbReference type="PeptideAtlas" id="P53420"/>
<dbReference type="ProteomicsDB" id="56583"/>
<dbReference type="Pumba" id="P53420"/>
<dbReference type="Antibodypedia" id="54339">
    <property type="antibodies" value="111 antibodies from 24 providers"/>
</dbReference>
<dbReference type="DNASU" id="1286"/>
<dbReference type="Ensembl" id="ENST00000396625.5">
    <property type="protein sequence ID" value="ENSP00000379866.3"/>
    <property type="gene ID" value="ENSG00000081052.14"/>
</dbReference>
<dbReference type="GeneID" id="1286"/>
<dbReference type="KEGG" id="hsa:1286"/>
<dbReference type="MANE-Select" id="ENST00000396625.5">
    <property type="protein sequence ID" value="ENSP00000379866.3"/>
    <property type="RefSeq nucleotide sequence ID" value="NM_000092.5"/>
    <property type="RefSeq protein sequence ID" value="NP_000083.3"/>
</dbReference>
<dbReference type="UCSC" id="uc061teu.1">
    <property type="organism name" value="human"/>
</dbReference>
<dbReference type="AGR" id="HGNC:2206"/>
<dbReference type="CTD" id="1286"/>
<dbReference type="DisGeNET" id="1286"/>
<dbReference type="GeneCards" id="COL4A4"/>
<dbReference type="GeneReviews" id="COL4A4"/>
<dbReference type="HGNC" id="HGNC:2206">
    <property type="gene designation" value="COL4A4"/>
</dbReference>
<dbReference type="HPA" id="ENSG00000081052">
    <property type="expression patterns" value="Low tissue specificity"/>
</dbReference>
<dbReference type="MalaCards" id="COL4A4"/>
<dbReference type="MIM" id="120131">
    <property type="type" value="gene"/>
</dbReference>
<dbReference type="MIM" id="141200">
    <property type="type" value="phenotype"/>
</dbReference>
<dbReference type="MIM" id="203780">
    <property type="type" value="phenotype"/>
</dbReference>
<dbReference type="neXtProt" id="NX_P53420"/>
<dbReference type="OpenTargets" id="ENSG00000081052"/>
<dbReference type="Orphanet" id="88918">
    <property type="disease" value="Autosomal dominant Alport syndrome"/>
</dbReference>
<dbReference type="Orphanet" id="88919">
    <property type="disease" value="Autosomal recessive Alport syndrome"/>
</dbReference>
<dbReference type="Orphanet" id="653722">
    <property type="disease" value="Digenic Alport syndrome"/>
</dbReference>
<dbReference type="PharmGKB" id="PA26721"/>
<dbReference type="VEuPathDB" id="HostDB:ENSG00000081052"/>
<dbReference type="eggNOG" id="KOG3544">
    <property type="taxonomic scope" value="Eukaryota"/>
</dbReference>
<dbReference type="GeneTree" id="ENSGT00940000153991"/>
<dbReference type="HOGENOM" id="CLU_002023_1_0_1"/>
<dbReference type="InParanoid" id="P53420"/>
<dbReference type="OMA" id="GDTISCN"/>
<dbReference type="OrthoDB" id="10071882at2759"/>
<dbReference type="PAN-GO" id="P53420">
    <property type="GO annotations" value="5 GO annotations based on evolutionary models"/>
</dbReference>
<dbReference type="PhylomeDB" id="P53420"/>
<dbReference type="TreeFam" id="TF344135"/>
<dbReference type="PathwayCommons" id="P53420"/>
<dbReference type="Reactome" id="R-HSA-1442490">
    <property type="pathway name" value="Collagen degradation"/>
</dbReference>
<dbReference type="Reactome" id="R-HSA-1474244">
    <property type="pathway name" value="Extracellular matrix organization"/>
</dbReference>
<dbReference type="Reactome" id="R-HSA-1650814">
    <property type="pathway name" value="Collagen biosynthesis and modifying enzymes"/>
</dbReference>
<dbReference type="Reactome" id="R-HSA-186797">
    <property type="pathway name" value="Signaling by PDGF"/>
</dbReference>
<dbReference type="Reactome" id="R-HSA-2022090">
    <property type="pathway name" value="Assembly of collagen fibrils and other multimeric structures"/>
</dbReference>
<dbReference type="Reactome" id="R-HSA-216083">
    <property type="pathway name" value="Integrin cell surface interactions"/>
</dbReference>
<dbReference type="Reactome" id="R-HSA-2214320">
    <property type="pathway name" value="Anchoring fibril formation"/>
</dbReference>
<dbReference type="Reactome" id="R-HSA-2243919">
    <property type="pathway name" value="Crosslinking of collagen fibrils"/>
</dbReference>
<dbReference type="Reactome" id="R-HSA-3000157">
    <property type="pathway name" value="Laminin interactions"/>
</dbReference>
<dbReference type="Reactome" id="R-HSA-3000171">
    <property type="pathway name" value="Non-integrin membrane-ECM interactions"/>
</dbReference>
<dbReference type="Reactome" id="R-HSA-3000178">
    <property type="pathway name" value="ECM proteoglycans"/>
</dbReference>
<dbReference type="Reactome" id="R-HSA-419037">
    <property type="pathway name" value="NCAM1 interactions"/>
</dbReference>
<dbReference type="Reactome" id="R-HSA-8948216">
    <property type="pathway name" value="Collagen chain trimerization"/>
</dbReference>
<dbReference type="SignaLink" id="P53420"/>
<dbReference type="SIGNOR" id="P53420"/>
<dbReference type="BioGRID-ORCS" id="1286">
    <property type="hits" value="10 hits in 1152 CRISPR screens"/>
</dbReference>
<dbReference type="ChiTaRS" id="COL4A4">
    <property type="organism name" value="human"/>
</dbReference>
<dbReference type="GeneWiki" id="COL4A4"/>
<dbReference type="GenomeRNAi" id="1286"/>
<dbReference type="Pharos" id="P53420">
    <property type="development level" value="Tbio"/>
</dbReference>
<dbReference type="PRO" id="PR:P53420"/>
<dbReference type="Proteomes" id="UP000005640">
    <property type="component" value="Chromosome 2"/>
</dbReference>
<dbReference type="RNAct" id="P53420">
    <property type="molecule type" value="protein"/>
</dbReference>
<dbReference type="Bgee" id="ENSG00000081052">
    <property type="expression patterns" value="Expressed in renal medulla and 125 other cell types or tissues"/>
</dbReference>
<dbReference type="ExpressionAtlas" id="P53420">
    <property type="expression patterns" value="baseline and differential"/>
</dbReference>
<dbReference type="GO" id="GO:0005604">
    <property type="term" value="C:basement membrane"/>
    <property type="evidence" value="ECO:0000314"/>
    <property type="project" value="UniProtKB"/>
</dbReference>
<dbReference type="GO" id="GO:0005587">
    <property type="term" value="C:collagen type IV trimer"/>
    <property type="evidence" value="ECO:0000314"/>
    <property type="project" value="UniProtKB"/>
</dbReference>
<dbReference type="GO" id="GO:0062023">
    <property type="term" value="C:collagen-containing extracellular matrix"/>
    <property type="evidence" value="ECO:0007005"/>
    <property type="project" value="BHF-UCL"/>
</dbReference>
<dbReference type="GO" id="GO:0005788">
    <property type="term" value="C:endoplasmic reticulum lumen"/>
    <property type="evidence" value="ECO:0000304"/>
    <property type="project" value="Reactome"/>
</dbReference>
<dbReference type="GO" id="GO:0005576">
    <property type="term" value="C:extracellular region"/>
    <property type="evidence" value="ECO:0000304"/>
    <property type="project" value="Reactome"/>
</dbReference>
<dbReference type="GO" id="GO:0005615">
    <property type="term" value="C:extracellular space"/>
    <property type="evidence" value="ECO:0000318"/>
    <property type="project" value="GO_Central"/>
</dbReference>
<dbReference type="GO" id="GO:0005201">
    <property type="term" value="F:extracellular matrix structural constituent"/>
    <property type="evidence" value="ECO:0000315"/>
    <property type="project" value="UniProtKB"/>
</dbReference>
<dbReference type="GO" id="GO:0030020">
    <property type="term" value="F:extracellular matrix structural constituent conferring tensile strength"/>
    <property type="evidence" value="ECO:0000318"/>
    <property type="project" value="GO_Central"/>
</dbReference>
<dbReference type="GO" id="GO:0060090">
    <property type="term" value="F:molecular adaptor activity"/>
    <property type="evidence" value="ECO:0000269"/>
    <property type="project" value="DisProt"/>
</dbReference>
<dbReference type="GO" id="GO:0032836">
    <property type="term" value="P:glomerular basement membrane development"/>
    <property type="evidence" value="ECO:0000315"/>
    <property type="project" value="UniProtKB"/>
</dbReference>
<dbReference type="FunFam" id="2.170.240.10:FF:000001">
    <property type="entry name" value="Collagen IV alpha 1 chain"/>
    <property type="match status" value="1"/>
</dbReference>
<dbReference type="Gene3D" id="2.170.240.10">
    <property type="entry name" value="Collagen IV, non-collagenous"/>
    <property type="match status" value="1"/>
</dbReference>
<dbReference type="InterPro" id="IPR008160">
    <property type="entry name" value="Collagen"/>
</dbReference>
<dbReference type="InterPro" id="IPR001442">
    <property type="entry name" value="Collagen_IV_NC"/>
</dbReference>
<dbReference type="InterPro" id="IPR036954">
    <property type="entry name" value="Collagen_IV_NC_sf"/>
</dbReference>
<dbReference type="InterPro" id="IPR050149">
    <property type="entry name" value="Collagen_superfamily"/>
</dbReference>
<dbReference type="InterPro" id="IPR016187">
    <property type="entry name" value="CTDL_fold"/>
</dbReference>
<dbReference type="PANTHER" id="PTHR24023">
    <property type="entry name" value="COLLAGEN ALPHA"/>
    <property type="match status" value="1"/>
</dbReference>
<dbReference type="PANTHER" id="PTHR24023:SF1082">
    <property type="entry name" value="COLLAGEN TRIPLE HELIX REPEAT"/>
    <property type="match status" value="1"/>
</dbReference>
<dbReference type="Pfam" id="PF01413">
    <property type="entry name" value="C4"/>
    <property type="match status" value="2"/>
</dbReference>
<dbReference type="Pfam" id="PF01391">
    <property type="entry name" value="Collagen"/>
    <property type="match status" value="15"/>
</dbReference>
<dbReference type="SMART" id="SM00111">
    <property type="entry name" value="C4"/>
    <property type="match status" value="2"/>
</dbReference>
<dbReference type="SUPFAM" id="SSF56436">
    <property type="entry name" value="C-type lectin-like"/>
    <property type="match status" value="2"/>
</dbReference>
<dbReference type="PROSITE" id="PS51403">
    <property type="entry name" value="NC1_IV"/>
    <property type="match status" value="1"/>
</dbReference>
<sequence length="1690" mass="164038">MWSLHIVLMRCSFRLTKSLATGPWSLILILFSVQYVYGSGKKYIGPCGGRDCSVCHCVPEKGSRGPPGPPGPQGPIGPLGAPGPIGLSGEKGMRGDRGPPGAAGDKGDKGPTGVPGFPGLDGIPGHPGPPGPRGKPGMSGHNGSRGDPGFPGGRGALGPGGPLGHPGEKGEKGNSVFILGAVKGIQGDRGDPGLPGLPGSWGAGGPAGPTGYPGEPGLVGPPGQPGRPGLKGNPGVGVKGQMGDPGEVGQQGSPGPTLLVEPPDFCLYKGEKGIKGIPGMVGLPGPPGRKGESGIGAKGEKGIPGFPGPRGDPGSYGSPGFPGLKGELGLVGDPGLFGLIGPKGDPGNRGHPGPPGVLVTPPLPLKGPPGDPGFPGRYGETGDVGPPGPPGLLGRPGEACAGMIGPPGPQGFPGLPGLPGEAGIPGRPDSAPGKPGKPGSPGLPGAPGLQGLPGSSVIYCSVGNPGPQGIKGKVGPPGGRGPKGEKGNEGLCACEPGPMGPPGPPGLPGRQGSKGDLGLPGWLGTKGDPGPPGAEGPPGLPGKHGASGPPGNKGAKGDMVVSRVKGHKGERGPDGPPGFPGQPGSHGRDGHAGEKGDPGPPGDHEDATPGGKGFPGPLGPPGKAGPVGPPGLGFPGPPGERGHPGVPGHPGVRGPDGLKGQKGDTISCNVTYPGRHGPPGFDGPPGPKGFPGPQGAPGLSGSDGHKGRPGTPGTAEIPGPPGFRGDMGDPGFGGEKGSSPVGPPGPPGSPGVNGQKGIPGDPAFGHLGPPGKRGLSGVPGIKGPRGDPGCPGAEGPAGIPGFLGLKGPKGREGHAGFPGVPGPPGHSCERGAPGIPGQPGLPGYPGSPGAPGGKGQPGDVGPPGPAGMKGLPGLPGRPGAHGPPGLPGIPGPFGDDGLPGPPGPKGPRGLPGFPGFPGERGKPGAEGCPGAKGEPGEKGMSGLPGDRGLRGAKGAIGPPGDEGEMAIISQKGTPGEPGPPGDDGFPGERGDKGTPGMQGRRGEPGRYGPPGFHRGEPGEKGQPGPPGPPGPPGSTGLRGFIGFPGLPGDQGEPGSPGPPGFSGIDGARGPKGNKGDPASHFGPPGPKGEPGSPGCPGHFGASGEQGLPGIQGPRGSPGRPGPPGSSGPPGCPGDHGMPGLRGQPGEMGDPGPRGLQGDPGIPGPPGIKGPSGSPGLNGLHGLKGQKGTKGASGLHDVGPPGPVGIPGLKGERGDPGSPGISPPGPRGKKGPPGPPGSSGPPGPAGATGRAPKDIPDPGPPGDQGPPGPDGPRGAPGPPGLPGSVDLLRGEPGDCGLPGPPGPPGPPGPPGYKGFPGCDGKDGQKGPVGFPGPQGPHGFPGPPGEKGLPGPPGRKGPTGLPGPRGEPGPPADVDDCPRIPGLPGAPGMRGPEGAMGLPGMRGPSGPGCKGEPGLDGRRGVDGVPGSPGPPGRKGDTGEDGYPGGPGPPGPIGDPGPKGFGPGYLGGFLLVLHSQTDQEPTCPLGMPRLWTGYSLLYLEGQEKAHNQDLGLAGSCLPVFSTLPFAYCNIHQVCHYAQRNDRSYWLASAAPLPMMPLSEEAIRPYVSRCAVCEAPAQAVAVHSQDQSIPPCPQTWRSLWIGYSFLMHTGAGDQGGGQALMSPGSCLEDFRAAPFLECQGRQGTCHFFANKYSFWLTTVKADLQFSSAPAPDTLKESQAQRQKISRCQVCVKYS</sequence>
<organism>
    <name type="scientific">Homo sapiens</name>
    <name type="common">Human</name>
    <dbReference type="NCBI Taxonomy" id="9606"/>
    <lineage>
        <taxon>Eukaryota</taxon>
        <taxon>Metazoa</taxon>
        <taxon>Chordata</taxon>
        <taxon>Craniata</taxon>
        <taxon>Vertebrata</taxon>
        <taxon>Euteleostomi</taxon>
        <taxon>Mammalia</taxon>
        <taxon>Eutheria</taxon>
        <taxon>Euarchontoglires</taxon>
        <taxon>Primates</taxon>
        <taxon>Haplorrhini</taxon>
        <taxon>Catarrhini</taxon>
        <taxon>Hominidae</taxon>
        <taxon>Homo</taxon>
    </lineage>
</organism>
<gene>
    <name type="primary">COL4A4</name>
</gene>
<evidence type="ECO:0000250" key="1"/>
<evidence type="ECO:0000255" key="2"/>
<evidence type="ECO:0000255" key="3">
    <source>
        <dbReference type="PROSITE-ProRule" id="PRU00736"/>
    </source>
</evidence>
<evidence type="ECO:0000256" key="4">
    <source>
        <dbReference type="SAM" id="MobiDB-lite"/>
    </source>
</evidence>
<evidence type="ECO:0000269" key="5">
    <source>
    </source>
</evidence>
<evidence type="ECO:0000269" key="6">
    <source>
    </source>
</evidence>
<evidence type="ECO:0000269" key="7">
    <source>
    </source>
</evidence>
<evidence type="ECO:0000269" key="8">
    <source>
    </source>
</evidence>
<evidence type="ECO:0000269" key="9">
    <source>
    </source>
</evidence>
<evidence type="ECO:0000269" key="10">
    <source>
    </source>
</evidence>
<evidence type="ECO:0000269" key="11">
    <source>
    </source>
</evidence>
<evidence type="ECO:0000269" key="12">
    <source>
    </source>
</evidence>
<evidence type="ECO:0000269" key="13">
    <source>
    </source>
</evidence>
<evidence type="ECO:0000305" key="14"/>
<evidence type="ECO:0007829" key="15">
    <source>
        <dbReference type="PDB" id="6WKU"/>
    </source>
</evidence>